<reference key="1">
    <citation type="journal article" date="2006" name="Proc. Natl. Acad. Sci. U.S.A.">
        <title>Comparative genomics of the lactic acid bacteria.</title>
        <authorList>
            <person name="Makarova K.S."/>
            <person name="Slesarev A."/>
            <person name="Wolf Y.I."/>
            <person name="Sorokin A."/>
            <person name="Mirkin B."/>
            <person name="Koonin E.V."/>
            <person name="Pavlov A."/>
            <person name="Pavlova N."/>
            <person name="Karamychev V."/>
            <person name="Polouchine N."/>
            <person name="Shakhova V."/>
            <person name="Grigoriev I."/>
            <person name="Lou Y."/>
            <person name="Rohksar D."/>
            <person name="Lucas S."/>
            <person name="Huang K."/>
            <person name="Goodstein D.M."/>
            <person name="Hawkins T."/>
            <person name="Plengvidhya V."/>
            <person name="Welker D."/>
            <person name="Hughes J."/>
            <person name="Goh Y."/>
            <person name="Benson A."/>
            <person name="Baldwin K."/>
            <person name="Lee J.-H."/>
            <person name="Diaz-Muniz I."/>
            <person name="Dosti B."/>
            <person name="Smeianov V."/>
            <person name="Wechter W."/>
            <person name="Barabote R."/>
            <person name="Lorca G."/>
            <person name="Altermann E."/>
            <person name="Barrangou R."/>
            <person name="Ganesan B."/>
            <person name="Xie Y."/>
            <person name="Rawsthorne H."/>
            <person name="Tamir D."/>
            <person name="Parker C."/>
            <person name="Breidt F."/>
            <person name="Broadbent J.R."/>
            <person name="Hutkins R."/>
            <person name="O'Sullivan D."/>
            <person name="Steele J."/>
            <person name="Unlu G."/>
            <person name="Saier M.H. Jr."/>
            <person name="Klaenhammer T."/>
            <person name="Richardson P."/>
            <person name="Kozyavkin S."/>
            <person name="Weimer B.C."/>
            <person name="Mills D.A."/>
        </authorList>
    </citation>
    <scope>NUCLEOTIDE SEQUENCE [LARGE SCALE GENOMIC DNA]</scope>
    <source>
        <strain>ATCC 367 / BCRC 12310 / CIP 105137 / JCM 1170 / LMG 11437 / NCIMB 947 / NCTC 947</strain>
    </source>
</reference>
<proteinExistence type="inferred from homology"/>
<name>IF1_LEVBA</name>
<sequence length="72" mass="8275">MAKSDVIEVEGKVTETLPNAMFRVELENGHEILAHVSGKIRMHYIRILPGDRVTVEMSPYDLSKGRITYRFK</sequence>
<organism>
    <name type="scientific">Levilactobacillus brevis (strain ATCC 367 / BCRC 12310 / CIP 105137 / JCM 1170 / LMG 11437 / NCIMB 947 / NCTC 947)</name>
    <name type="common">Lactobacillus brevis</name>
    <dbReference type="NCBI Taxonomy" id="387344"/>
    <lineage>
        <taxon>Bacteria</taxon>
        <taxon>Bacillati</taxon>
        <taxon>Bacillota</taxon>
        <taxon>Bacilli</taxon>
        <taxon>Lactobacillales</taxon>
        <taxon>Lactobacillaceae</taxon>
        <taxon>Levilactobacillus</taxon>
    </lineage>
</organism>
<protein>
    <recommendedName>
        <fullName evidence="1">Translation initiation factor IF-1</fullName>
    </recommendedName>
</protein>
<accession>Q03PX9</accession>
<comment type="function">
    <text evidence="1">One of the essential components for the initiation of protein synthesis. Stabilizes the binding of IF-2 and IF-3 on the 30S subunit to which N-formylmethionyl-tRNA(fMet) subsequently binds. Helps modulate mRNA selection, yielding the 30S pre-initiation complex (PIC). Upon addition of the 50S ribosomal subunit IF-1, IF-2 and IF-3 are released leaving the mature 70S translation initiation complex.</text>
</comment>
<comment type="subunit">
    <text evidence="1">Component of the 30S ribosomal translation pre-initiation complex which assembles on the 30S ribosome in the order IF-2 and IF-3, IF-1 and N-formylmethionyl-tRNA(fMet); mRNA recruitment can occur at any time during PIC assembly.</text>
</comment>
<comment type="subcellular location">
    <subcellularLocation>
        <location evidence="1">Cytoplasm</location>
    </subcellularLocation>
</comment>
<comment type="similarity">
    <text evidence="1">Belongs to the IF-1 family.</text>
</comment>
<feature type="chain" id="PRO_0000338843" description="Translation initiation factor IF-1">
    <location>
        <begin position="1"/>
        <end position="72"/>
    </location>
</feature>
<feature type="domain" description="S1-like" evidence="1">
    <location>
        <begin position="1"/>
        <end position="72"/>
    </location>
</feature>
<gene>
    <name evidence="1" type="primary">infA</name>
    <name type="ordered locus">LVIS_1668</name>
</gene>
<dbReference type="EMBL" id="CP000416">
    <property type="protein sequence ID" value="ABJ64743.1"/>
    <property type="molecule type" value="Genomic_DNA"/>
</dbReference>
<dbReference type="RefSeq" id="WP_011668477.1">
    <property type="nucleotide sequence ID" value="NC_008497.1"/>
</dbReference>
<dbReference type="SMR" id="Q03PX9"/>
<dbReference type="STRING" id="387344.LVIS_1668"/>
<dbReference type="GeneID" id="97414344"/>
<dbReference type="KEGG" id="lbr:LVIS_1668"/>
<dbReference type="eggNOG" id="COG0361">
    <property type="taxonomic scope" value="Bacteria"/>
</dbReference>
<dbReference type="HOGENOM" id="CLU_151267_1_0_9"/>
<dbReference type="Proteomes" id="UP000001652">
    <property type="component" value="Chromosome"/>
</dbReference>
<dbReference type="GO" id="GO:0005829">
    <property type="term" value="C:cytosol"/>
    <property type="evidence" value="ECO:0007669"/>
    <property type="project" value="TreeGrafter"/>
</dbReference>
<dbReference type="GO" id="GO:0043022">
    <property type="term" value="F:ribosome binding"/>
    <property type="evidence" value="ECO:0007669"/>
    <property type="project" value="UniProtKB-UniRule"/>
</dbReference>
<dbReference type="GO" id="GO:0019843">
    <property type="term" value="F:rRNA binding"/>
    <property type="evidence" value="ECO:0007669"/>
    <property type="project" value="UniProtKB-UniRule"/>
</dbReference>
<dbReference type="GO" id="GO:0003743">
    <property type="term" value="F:translation initiation factor activity"/>
    <property type="evidence" value="ECO:0007669"/>
    <property type="project" value="UniProtKB-UniRule"/>
</dbReference>
<dbReference type="CDD" id="cd04451">
    <property type="entry name" value="S1_IF1"/>
    <property type="match status" value="1"/>
</dbReference>
<dbReference type="FunFam" id="2.40.50.140:FF:000002">
    <property type="entry name" value="Translation initiation factor IF-1"/>
    <property type="match status" value="1"/>
</dbReference>
<dbReference type="Gene3D" id="2.40.50.140">
    <property type="entry name" value="Nucleic acid-binding proteins"/>
    <property type="match status" value="1"/>
</dbReference>
<dbReference type="HAMAP" id="MF_00075">
    <property type="entry name" value="IF_1"/>
    <property type="match status" value="1"/>
</dbReference>
<dbReference type="InterPro" id="IPR012340">
    <property type="entry name" value="NA-bd_OB-fold"/>
</dbReference>
<dbReference type="InterPro" id="IPR006196">
    <property type="entry name" value="RNA-binding_domain_S1_IF1"/>
</dbReference>
<dbReference type="InterPro" id="IPR003029">
    <property type="entry name" value="S1_domain"/>
</dbReference>
<dbReference type="InterPro" id="IPR004368">
    <property type="entry name" value="TIF_IF1"/>
</dbReference>
<dbReference type="NCBIfam" id="TIGR00008">
    <property type="entry name" value="infA"/>
    <property type="match status" value="1"/>
</dbReference>
<dbReference type="PANTHER" id="PTHR33370">
    <property type="entry name" value="TRANSLATION INITIATION FACTOR IF-1, CHLOROPLASTIC"/>
    <property type="match status" value="1"/>
</dbReference>
<dbReference type="PANTHER" id="PTHR33370:SF1">
    <property type="entry name" value="TRANSLATION INITIATION FACTOR IF-1, CHLOROPLASTIC"/>
    <property type="match status" value="1"/>
</dbReference>
<dbReference type="Pfam" id="PF01176">
    <property type="entry name" value="eIF-1a"/>
    <property type="match status" value="1"/>
</dbReference>
<dbReference type="SMART" id="SM00316">
    <property type="entry name" value="S1"/>
    <property type="match status" value="1"/>
</dbReference>
<dbReference type="SUPFAM" id="SSF50249">
    <property type="entry name" value="Nucleic acid-binding proteins"/>
    <property type="match status" value="1"/>
</dbReference>
<dbReference type="PROSITE" id="PS50832">
    <property type="entry name" value="S1_IF1_TYPE"/>
    <property type="match status" value="1"/>
</dbReference>
<evidence type="ECO:0000255" key="1">
    <source>
        <dbReference type="HAMAP-Rule" id="MF_00075"/>
    </source>
</evidence>
<keyword id="KW-0963">Cytoplasm</keyword>
<keyword id="KW-0396">Initiation factor</keyword>
<keyword id="KW-0648">Protein biosynthesis</keyword>
<keyword id="KW-1185">Reference proteome</keyword>
<keyword id="KW-0694">RNA-binding</keyword>
<keyword id="KW-0699">rRNA-binding</keyword>